<feature type="chain" id="PRO_0000184906" description="3-methyl-2-oxobutanoate hydroxymethyltransferase">
    <location>
        <begin position="1"/>
        <end position="264"/>
    </location>
</feature>
<feature type="active site" description="Proton acceptor" evidence="1">
    <location>
        <position position="181"/>
    </location>
</feature>
<feature type="binding site" evidence="1">
    <location>
        <begin position="45"/>
        <end position="46"/>
    </location>
    <ligand>
        <name>3-methyl-2-oxobutanoate</name>
        <dbReference type="ChEBI" id="CHEBI:11851"/>
    </ligand>
</feature>
<feature type="binding site" evidence="1">
    <location>
        <position position="45"/>
    </location>
    <ligand>
        <name>Mg(2+)</name>
        <dbReference type="ChEBI" id="CHEBI:18420"/>
    </ligand>
</feature>
<feature type="binding site" evidence="1">
    <location>
        <position position="84"/>
    </location>
    <ligand>
        <name>3-methyl-2-oxobutanoate</name>
        <dbReference type="ChEBI" id="CHEBI:11851"/>
    </ligand>
</feature>
<feature type="binding site" evidence="1">
    <location>
        <position position="84"/>
    </location>
    <ligand>
        <name>Mg(2+)</name>
        <dbReference type="ChEBI" id="CHEBI:18420"/>
    </ligand>
</feature>
<feature type="binding site" evidence="1">
    <location>
        <position position="112"/>
    </location>
    <ligand>
        <name>3-methyl-2-oxobutanoate</name>
        <dbReference type="ChEBI" id="CHEBI:11851"/>
    </ligand>
</feature>
<feature type="binding site" evidence="1">
    <location>
        <position position="114"/>
    </location>
    <ligand>
        <name>Mg(2+)</name>
        <dbReference type="ChEBI" id="CHEBI:18420"/>
    </ligand>
</feature>
<keyword id="KW-0963">Cytoplasm</keyword>
<keyword id="KW-0460">Magnesium</keyword>
<keyword id="KW-0479">Metal-binding</keyword>
<keyword id="KW-0566">Pantothenate biosynthesis</keyword>
<keyword id="KW-0808">Transferase</keyword>
<dbReference type="EC" id="2.1.2.11" evidence="1"/>
<dbReference type="EMBL" id="BA000037">
    <property type="protein sequence ID" value="BAC95527.1"/>
    <property type="molecule type" value="Genomic_DNA"/>
</dbReference>
<dbReference type="RefSeq" id="WP_011079565.1">
    <property type="nucleotide sequence ID" value="NC_005139.1"/>
</dbReference>
<dbReference type="SMR" id="Q7MHV4"/>
<dbReference type="STRING" id="672.VV93_v1c24750"/>
<dbReference type="GeneID" id="93895896"/>
<dbReference type="KEGG" id="vvy:VV2763"/>
<dbReference type="eggNOG" id="COG0413">
    <property type="taxonomic scope" value="Bacteria"/>
</dbReference>
<dbReference type="HOGENOM" id="CLU_036645_1_0_6"/>
<dbReference type="UniPathway" id="UPA00028">
    <property type="reaction ID" value="UER00003"/>
</dbReference>
<dbReference type="Proteomes" id="UP000002675">
    <property type="component" value="Chromosome I"/>
</dbReference>
<dbReference type="GO" id="GO:0005737">
    <property type="term" value="C:cytoplasm"/>
    <property type="evidence" value="ECO:0007669"/>
    <property type="project" value="UniProtKB-SubCell"/>
</dbReference>
<dbReference type="GO" id="GO:0003864">
    <property type="term" value="F:3-methyl-2-oxobutanoate hydroxymethyltransferase activity"/>
    <property type="evidence" value="ECO:0007669"/>
    <property type="project" value="UniProtKB-UniRule"/>
</dbReference>
<dbReference type="GO" id="GO:0000287">
    <property type="term" value="F:magnesium ion binding"/>
    <property type="evidence" value="ECO:0007669"/>
    <property type="project" value="TreeGrafter"/>
</dbReference>
<dbReference type="GO" id="GO:0015940">
    <property type="term" value="P:pantothenate biosynthetic process"/>
    <property type="evidence" value="ECO:0007669"/>
    <property type="project" value="UniProtKB-UniRule"/>
</dbReference>
<dbReference type="CDD" id="cd06557">
    <property type="entry name" value="KPHMT-like"/>
    <property type="match status" value="1"/>
</dbReference>
<dbReference type="FunFam" id="3.20.20.60:FF:000003">
    <property type="entry name" value="3-methyl-2-oxobutanoate hydroxymethyltransferase"/>
    <property type="match status" value="1"/>
</dbReference>
<dbReference type="Gene3D" id="3.20.20.60">
    <property type="entry name" value="Phosphoenolpyruvate-binding domains"/>
    <property type="match status" value="1"/>
</dbReference>
<dbReference type="HAMAP" id="MF_00156">
    <property type="entry name" value="PanB"/>
    <property type="match status" value="1"/>
</dbReference>
<dbReference type="InterPro" id="IPR003700">
    <property type="entry name" value="Pantoate_hydroxy_MeTrfase"/>
</dbReference>
<dbReference type="InterPro" id="IPR015813">
    <property type="entry name" value="Pyrv/PenolPyrv_kinase-like_dom"/>
</dbReference>
<dbReference type="InterPro" id="IPR040442">
    <property type="entry name" value="Pyrv_kinase-like_dom_sf"/>
</dbReference>
<dbReference type="NCBIfam" id="TIGR00222">
    <property type="entry name" value="panB"/>
    <property type="match status" value="1"/>
</dbReference>
<dbReference type="NCBIfam" id="NF001452">
    <property type="entry name" value="PRK00311.1"/>
    <property type="match status" value="1"/>
</dbReference>
<dbReference type="PANTHER" id="PTHR20881">
    <property type="entry name" value="3-METHYL-2-OXOBUTANOATE HYDROXYMETHYLTRANSFERASE"/>
    <property type="match status" value="1"/>
</dbReference>
<dbReference type="PANTHER" id="PTHR20881:SF0">
    <property type="entry name" value="3-METHYL-2-OXOBUTANOATE HYDROXYMETHYLTRANSFERASE"/>
    <property type="match status" value="1"/>
</dbReference>
<dbReference type="Pfam" id="PF02548">
    <property type="entry name" value="Pantoate_transf"/>
    <property type="match status" value="1"/>
</dbReference>
<dbReference type="PIRSF" id="PIRSF000388">
    <property type="entry name" value="Pantoate_hydroxy_MeTrfase"/>
    <property type="match status" value="1"/>
</dbReference>
<dbReference type="SUPFAM" id="SSF51621">
    <property type="entry name" value="Phosphoenolpyruvate/pyruvate domain"/>
    <property type="match status" value="1"/>
</dbReference>
<name>PANB_VIBVY</name>
<evidence type="ECO:0000255" key="1">
    <source>
        <dbReference type="HAMAP-Rule" id="MF_00156"/>
    </source>
</evidence>
<organism>
    <name type="scientific">Vibrio vulnificus (strain YJ016)</name>
    <dbReference type="NCBI Taxonomy" id="196600"/>
    <lineage>
        <taxon>Bacteria</taxon>
        <taxon>Pseudomonadati</taxon>
        <taxon>Pseudomonadota</taxon>
        <taxon>Gammaproteobacteria</taxon>
        <taxon>Vibrionales</taxon>
        <taxon>Vibrionaceae</taxon>
        <taxon>Vibrio</taxon>
    </lineage>
</organism>
<proteinExistence type="inferred from homology"/>
<protein>
    <recommendedName>
        <fullName evidence="1">3-methyl-2-oxobutanoate hydroxymethyltransferase</fullName>
        <ecNumber evidence="1">2.1.2.11</ecNumber>
    </recommendedName>
    <alternativeName>
        <fullName evidence="1">Ketopantoate hydroxymethyltransferase</fullName>
        <shortName evidence="1">KPHMT</shortName>
    </alternativeName>
</protein>
<accession>Q7MHV4</accession>
<comment type="function">
    <text evidence="1">Catalyzes the reversible reaction in which hydroxymethyl group from 5,10-methylenetetrahydrofolate is transferred onto alpha-ketoisovalerate to form ketopantoate.</text>
</comment>
<comment type="catalytic activity">
    <reaction evidence="1">
        <text>3-methyl-2-oxobutanoate + (6R)-5,10-methylene-5,6,7,8-tetrahydrofolate + H2O = 2-dehydropantoate + (6S)-5,6,7,8-tetrahydrofolate</text>
        <dbReference type="Rhea" id="RHEA:11824"/>
        <dbReference type="ChEBI" id="CHEBI:11561"/>
        <dbReference type="ChEBI" id="CHEBI:11851"/>
        <dbReference type="ChEBI" id="CHEBI:15377"/>
        <dbReference type="ChEBI" id="CHEBI:15636"/>
        <dbReference type="ChEBI" id="CHEBI:57453"/>
        <dbReference type="EC" id="2.1.2.11"/>
    </reaction>
</comment>
<comment type="cofactor">
    <cofactor evidence="1">
        <name>Mg(2+)</name>
        <dbReference type="ChEBI" id="CHEBI:18420"/>
    </cofactor>
    <text evidence="1">Binds 1 Mg(2+) ion per subunit.</text>
</comment>
<comment type="pathway">
    <text evidence="1">Cofactor biosynthesis; (R)-pantothenate biosynthesis; (R)-pantoate from 3-methyl-2-oxobutanoate: step 1/2.</text>
</comment>
<comment type="subunit">
    <text evidence="1">Homodecamer; pentamer of dimers.</text>
</comment>
<comment type="subcellular location">
    <subcellularLocation>
        <location evidence="1">Cytoplasm</location>
    </subcellularLocation>
</comment>
<comment type="similarity">
    <text evidence="1">Belongs to the PanB family.</text>
</comment>
<gene>
    <name evidence="1" type="primary">panB</name>
    <name type="ordered locus">VV2763</name>
</gene>
<reference key="1">
    <citation type="journal article" date="2003" name="Genome Res.">
        <title>Comparative genome analysis of Vibrio vulnificus, a marine pathogen.</title>
        <authorList>
            <person name="Chen C.-Y."/>
            <person name="Wu K.-M."/>
            <person name="Chang Y.-C."/>
            <person name="Chang C.-H."/>
            <person name="Tsai H.-C."/>
            <person name="Liao T.-L."/>
            <person name="Liu Y.-M."/>
            <person name="Chen H.-J."/>
            <person name="Shen A.B.-T."/>
            <person name="Li J.-C."/>
            <person name="Su T.-L."/>
            <person name="Shao C.-P."/>
            <person name="Lee C.-T."/>
            <person name="Hor L.-I."/>
            <person name="Tsai S.-F."/>
        </authorList>
    </citation>
    <scope>NUCLEOTIDE SEQUENCE [LARGE SCALE GENOMIC DNA]</scope>
    <source>
        <strain>YJ016</strain>
    </source>
</reference>
<sequence>MKKITINDLIKWKQEGRKFATSTAYDASFAQLFESQEMPVLLVGDSLGMVLQGKNDTLPVTVEDIAYHTRCVRAGSPNCLLMADMPFMSYATPEQACENAAQLMRAGANMVKIEGGDWLVDTVKMLTERAVPVCAHLGLTPQSVNIFGGYKVQGRDQEKADRMVKDALALQAAGAQIVLLECVPAELAARITQVLDVPVIGIGAGNVTDGQILVMHDMFGISANYMPKFSKNFLAETGDMRKAVALYMEQVQAGTFPDEAHTIA</sequence>